<reference key="1">
    <citation type="submission" date="2008-10" db="EMBL/GenBank/DDBJ databases">
        <title>The complete genome sequence of Helicobacter pylori strain P12.</title>
        <authorList>
            <person name="Fischer W."/>
            <person name="Windhager L."/>
            <person name="Karnholz A."/>
            <person name="Zeiller M."/>
            <person name="Zimmer R."/>
            <person name="Haas R."/>
        </authorList>
    </citation>
    <scope>NUCLEOTIDE SEQUENCE [LARGE SCALE GENOMIC DNA]</scope>
    <source>
        <strain>P12</strain>
    </source>
</reference>
<name>CMOA_HELP2</name>
<comment type="function">
    <text evidence="1">Catalyzes the conversion of S-adenosyl-L-methionine (SAM) to carboxy-S-adenosyl-L-methionine (Cx-SAM).</text>
</comment>
<comment type="catalytic activity">
    <reaction evidence="1">
        <text>prephenate + S-adenosyl-L-methionine = carboxy-S-adenosyl-L-methionine + 3-phenylpyruvate + H2O</text>
        <dbReference type="Rhea" id="RHEA:51692"/>
        <dbReference type="ChEBI" id="CHEBI:15377"/>
        <dbReference type="ChEBI" id="CHEBI:18005"/>
        <dbReference type="ChEBI" id="CHEBI:29934"/>
        <dbReference type="ChEBI" id="CHEBI:59789"/>
        <dbReference type="ChEBI" id="CHEBI:134278"/>
    </reaction>
</comment>
<comment type="subunit">
    <text evidence="1">Homodimer.</text>
</comment>
<comment type="similarity">
    <text evidence="1">Belongs to the class I-like SAM-binding methyltransferase superfamily. Cx-SAM synthase family.</text>
</comment>
<proteinExistence type="inferred from homology"/>
<dbReference type="EC" id="2.1.3.-" evidence="1"/>
<dbReference type="EMBL" id="CP001217">
    <property type="protein sequence ID" value="ACJ08184.1"/>
    <property type="molecule type" value="Genomic_DNA"/>
</dbReference>
<dbReference type="SMR" id="B6JMQ6"/>
<dbReference type="KEGG" id="hpp:HPP12_1032"/>
<dbReference type="HOGENOM" id="CLU_078475_0_0_7"/>
<dbReference type="Proteomes" id="UP000008198">
    <property type="component" value="Chromosome"/>
</dbReference>
<dbReference type="GO" id="GO:0016743">
    <property type="term" value="F:carboxyl- or carbamoyltransferase activity"/>
    <property type="evidence" value="ECO:0007669"/>
    <property type="project" value="UniProtKB-UniRule"/>
</dbReference>
<dbReference type="GO" id="GO:1904047">
    <property type="term" value="F:S-adenosyl-L-methionine binding"/>
    <property type="evidence" value="ECO:0007669"/>
    <property type="project" value="UniProtKB-UniRule"/>
</dbReference>
<dbReference type="GO" id="GO:0002098">
    <property type="term" value="P:tRNA wobble uridine modification"/>
    <property type="evidence" value="ECO:0007669"/>
    <property type="project" value="InterPro"/>
</dbReference>
<dbReference type="CDD" id="cd02440">
    <property type="entry name" value="AdoMet_MTases"/>
    <property type="match status" value="1"/>
</dbReference>
<dbReference type="FunFam" id="3.40.50.150:FF:000474">
    <property type="entry name" value="Carboxy-S-adenosyl-L-methionine synthase"/>
    <property type="match status" value="1"/>
</dbReference>
<dbReference type="Gene3D" id="3.40.50.150">
    <property type="entry name" value="Vaccinia Virus protein VP39"/>
    <property type="match status" value="1"/>
</dbReference>
<dbReference type="HAMAP" id="MF_01589">
    <property type="entry name" value="Cx_SAM_synthase"/>
    <property type="match status" value="1"/>
</dbReference>
<dbReference type="InterPro" id="IPR005271">
    <property type="entry name" value="CmoA"/>
</dbReference>
<dbReference type="InterPro" id="IPR041698">
    <property type="entry name" value="Methyltransf_25"/>
</dbReference>
<dbReference type="InterPro" id="IPR029063">
    <property type="entry name" value="SAM-dependent_MTases_sf"/>
</dbReference>
<dbReference type="NCBIfam" id="TIGR00740">
    <property type="entry name" value="carboxy-S-adenosyl-L-methionine synthase CmoA"/>
    <property type="match status" value="1"/>
</dbReference>
<dbReference type="PANTHER" id="PTHR43861:SF2">
    <property type="entry name" value="CARBOXY-S-ADENOSYL-L-METHIONINE SYNTHASE"/>
    <property type="match status" value="1"/>
</dbReference>
<dbReference type="PANTHER" id="PTHR43861">
    <property type="entry name" value="TRANS-ACONITATE 2-METHYLTRANSFERASE-RELATED"/>
    <property type="match status" value="1"/>
</dbReference>
<dbReference type="Pfam" id="PF13649">
    <property type="entry name" value="Methyltransf_25"/>
    <property type="match status" value="1"/>
</dbReference>
<dbReference type="PIRSF" id="PIRSF006325">
    <property type="entry name" value="MeTrfase_bac"/>
    <property type="match status" value="1"/>
</dbReference>
<dbReference type="SUPFAM" id="SSF53335">
    <property type="entry name" value="S-adenosyl-L-methionine-dependent methyltransferases"/>
    <property type="match status" value="1"/>
</dbReference>
<organism>
    <name type="scientific">Helicobacter pylori (strain P12)</name>
    <dbReference type="NCBI Taxonomy" id="570508"/>
    <lineage>
        <taxon>Bacteria</taxon>
        <taxon>Pseudomonadati</taxon>
        <taxon>Campylobacterota</taxon>
        <taxon>Epsilonproteobacteria</taxon>
        <taxon>Campylobacterales</taxon>
        <taxon>Helicobacteraceae</taxon>
        <taxon>Helicobacter</taxon>
    </lineage>
</organism>
<accession>B6JMQ6</accession>
<gene>
    <name evidence="1" type="primary">cmoA</name>
    <name type="ordered locus">HPP12_1032</name>
</gene>
<protein>
    <recommendedName>
        <fullName evidence="1">Carboxy-S-adenosyl-L-methionine synthase</fullName>
        <shortName evidence="1">Cx-SAM synthase</shortName>
        <ecNumber evidence="1">2.1.3.-</ecNumber>
    </recommendedName>
</protein>
<keyword id="KW-0949">S-adenosyl-L-methionine</keyword>
<keyword id="KW-0808">Transferase</keyword>
<evidence type="ECO:0000255" key="1">
    <source>
        <dbReference type="HAMAP-Rule" id="MF_01589"/>
    </source>
</evidence>
<sequence>MKDTLFNKSLNKRFCFDEKVAHVFDDMLERSIPYYHEMLNLGAYFIAQNLKENIHPKPLPKPLIYDLGCSTGNFFIALNQQIQQDIELVGIDNSMPMLKKAQEKLKDFNNVRFECMDFLEVEFKEASAFSLLFVLQFVRPMQREVLLKKIYNSLALNGVLLVGEKIMSEDRILDKQMIELYYLYKQNQGYSHNEIAFKREALENVLVPYSLKENVALLESVGFKHVEAVFKWVNFTLLVARKT</sequence>
<feature type="chain" id="PRO_1000201356" description="Carboxy-S-adenosyl-L-methionine synthase">
    <location>
        <begin position="1"/>
        <end position="243"/>
    </location>
</feature>
<feature type="binding site" evidence="1">
    <location>
        <position position="35"/>
    </location>
    <ligand>
        <name>S-adenosyl-L-methionine</name>
        <dbReference type="ChEBI" id="CHEBI:59789"/>
    </ligand>
</feature>
<feature type="binding site" evidence="1">
    <location>
        <begin position="68"/>
        <end position="70"/>
    </location>
    <ligand>
        <name>S-adenosyl-L-methionine</name>
        <dbReference type="ChEBI" id="CHEBI:59789"/>
    </ligand>
</feature>
<feature type="binding site" evidence="1">
    <location>
        <begin position="92"/>
        <end position="93"/>
    </location>
    <ligand>
        <name>S-adenosyl-L-methionine</name>
        <dbReference type="ChEBI" id="CHEBI:59789"/>
    </ligand>
</feature>
<feature type="binding site" evidence="1">
    <location>
        <position position="199"/>
    </location>
    <ligand>
        <name>S-adenosyl-L-methionine</name>
        <dbReference type="ChEBI" id="CHEBI:59789"/>
    </ligand>
</feature>